<accession>Q5JNT2</accession>
<feature type="chain" id="PRO_0000437775" description="Acyl transferase 4">
    <location>
        <begin position="1"/>
        <end position="439"/>
    </location>
</feature>
<feature type="active site" description="Proton acceptor" evidence="1">
    <location>
        <position position="166"/>
    </location>
</feature>
<feature type="active site" description="Proton acceptor" evidence="1">
    <location>
        <position position="382"/>
    </location>
</feature>
<reference key="1">
    <citation type="journal article" date="2002" name="Nature">
        <title>The genome sequence and structure of rice chromosome 1.</title>
        <authorList>
            <person name="Sasaki T."/>
            <person name="Matsumoto T."/>
            <person name="Yamamoto K."/>
            <person name="Sakata K."/>
            <person name="Baba T."/>
            <person name="Katayose Y."/>
            <person name="Wu J."/>
            <person name="Niimura Y."/>
            <person name="Cheng Z."/>
            <person name="Nagamura Y."/>
            <person name="Antonio B.A."/>
            <person name="Kanamori H."/>
            <person name="Hosokawa S."/>
            <person name="Masukawa M."/>
            <person name="Arikawa K."/>
            <person name="Chiden Y."/>
            <person name="Hayashi M."/>
            <person name="Okamoto M."/>
            <person name="Ando T."/>
            <person name="Aoki H."/>
            <person name="Arita K."/>
            <person name="Hamada M."/>
            <person name="Harada C."/>
            <person name="Hijishita S."/>
            <person name="Honda M."/>
            <person name="Ichikawa Y."/>
            <person name="Idonuma A."/>
            <person name="Iijima M."/>
            <person name="Ikeda M."/>
            <person name="Ikeno M."/>
            <person name="Ito S."/>
            <person name="Ito T."/>
            <person name="Ito Y."/>
            <person name="Ito Y."/>
            <person name="Iwabuchi A."/>
            <person name="Kamiya K."/>
            <person name="Karasawa W."/>
            <person name="Katagiri S."/>
            <person name="Kikuta A."/>
            <person name="Kobayashi N."/>
            <person name="Kono I."/>
            <person name="Machita K."/>
            <person name="Maehara T."/>
            <person name="Mizuno H."/>
            <person name="Mizubayashi T."/>
            <person name="Mukai Y."/>
            <person name="Nagasaki H."/>
            <person name="Nakashima M."/>
            <person name="Nakama Y."/>
            <person name="Nakamichi Y."/>
            <person name="Nakamura M."/>
            <person name="Namiki N."/>
            <person name="Negishi M."/>
            <person name="Ohta I."/>
            <person name="Ono N."/>
            <person name="Saji S."/>
            <person name="Sakai K."/>
            <person name="Shibata M."/>
            <person name="Shimokawa T."/>
            <person name="Shomura A."/>
            <person name="Song J."/>
            <person name="Takazaki Y."/>
            <person name="Terasawa K."/>
            <person name="Tsuji K."/>
            <person name="Waki K."/>
            <person name="Yamagata H."/>
            <person name="Yamane H."/>
            <person name="Yoshiki S."/>
            <person name="Yoshihara R."/>
            <person name="Yukawa K."/>
            <person name="Zhong H."/>
            <person name="Iwama H."/>
            <person name="Endo T."/>
            <person name="Ito H."/>
            <person name="Hahn J.H."/>
            <person name="Kim H.-I."/>
            <person name="Eun M.-Y."/>
            <person name="Yano M."/>
            <person name="Jiang J."/>
            <person name="Gojobori T."/>
        </authorList>
    </citation>
    <scope>NUCLEOTIDE SEQUENCE [LARGE SCALE GENOMIC DNA]</scope>
    <source>
        <strain>cv. Nipponbare</strain>
    </source>
</reference>
<reference key="2">
    <citation type="journal article" date="2005" name="Nature">
        <title>The map-based sequence of the rice genome.</title>
        <authorList>
            <consortium name="International rice genome sequencing project (IRGSP)"/>
        </authorList>
    </citation>
    <scope>NUCLEOTIDE SEQUENCE [LARGE SCALE GENOMIC DNA]</scope>
    <source>
        <strain>cv. Nipponbare</strain>
    </source>
</reference>
<reference key="3">
    <citation type="journal article" date="2008" name="Nucleic Acids Res.">
        <title>The rice annotation project database (RAP-DB): 2008 update.</title>
        <authorList>
            <consortium name="The rice annotation project (RAP)"/>
        </authorList>
    </citation>
    <scope>GENOME REANNOTATION</scope>
    <source>
        <strain>cv. Nipponbare</strain>
    </source>
</reference>
<reference key="4">
    <citation type="journal article" date="2013" name="Rice">
        <title>Improvement of the Oryza sativa Nipponbare reference genome using next generation sequence and optical map data.</title>
        <authorList>
            <person name="Kawahara Y."/>
            <person name="de la Bastide M."/>
            <person name="Hamilton J.P."/>
            <person name="Kanamori H."/>
            <person name="McCombie W.R."/>
            <person name="Ouyang S."/>
            <person name="Schwartz D.C."/>
            <person name="Tanaka T."/>
            <person name="Wu J."/>
            <person name="Zhou S."/>
            <person name="Childs K.L."/>
            <person name="Davidson R.M."/>
            <person name="Lin H."/>
            <person name="Quesada-Ocampo L."/>
            <person name="Vaillancourt B."/>
            <person name="Sakai H."/>
            <person name="Lee S.S."/>
            <person name="Kim J."/>
            <person name="Numa H."/>
            <person name="Itoh T."/>
            <person name="Buell C.R."/>
            <person name="Matsumoto T."/>
        </authorList>
    </citation>
    <scope>GENOME REANNOTATION</scope>
    <source>
        <strain>cv. Nipponbare</strain>
    </source>
</reference>
<reference key="5">
    <citation type="journal article" date="2005" name="PLoS Biol.">
        <title>The genomes of Oryza sativa: a history of duplications.</title>
        <authorList>
            <person name="Yu J."/>
            <person name="Wang J."/>
            <person name="Lin W."/>
            <person name="Li S."/>
            <person name="Li H."/>
            <person name="Zhou J."/>
            <person name="Ni P."/>
            <person name="Dong W."/>
            <person name="Hu S."/>
            <person name="Zeng C."/>
            <person name="Zhang J."/>
            <person name="Zhang Y."/>
            <person name="Li R."/>
            <person name="Xu Z."/>
            <person name="Li S."/>
            <person name="Li X."/>
            <person name="Zheng H."/>
            <person name="Cong L."/>
            <person name="Lin L."/>
            <person name="Yin J."/>
            <person name="Geng J."/>
            <person name="Li G."/>
            <person name="Shi J."/>
            <person name="Liu J."/>
            <person name="Lv H."/>
            <person name="Li J."/>
            <person name="Wang J."/>
            <person name="Deng Y."/>
            <person name="Ran L."/>
            <person name="Shi X."/>
            <person name="Wang X."/>
            <person name="Wu Q."/>
            <person name="Li C."/>
            <person name="Ren X."/>
            <person name="Wang J."/>
            <person name="Wang X."/>
            <person name="Li D."/>
            <person name="Liu D."/>
            <person name="Zhang X."/>
            <person name="Ji Z."/>
            <person name="Zhao W."/>
            <person name="Sun Y."/>
            <person name="Zhang Z."/>
            <person name="Bao J."/>
            <person name="Han Y."/>
            <person name="Dong L."/>
            <person name="Ji J."/>
            <person name="Chen P."/>
            <person name="Wu S."/>
            <person name="Liu J."/>
            <person name="Xiao Y."/>
            <person name="Bu D."/>
            <person name="Tan J."/>
            <person name="Yang L."/>
            <person name="Ye C."/>
            <person name="Zhang J."/>
            <person name="Xu J."/>
            <person name="Zhou Y."/>
            <person name="Yu Y."/>
            <person name="Zhang B."/>
            <person name="Zhuang S."/>
            <person name="Wei H."/>
            <person name="Liu B."/>
            <person name="Lei M."/>
            <person name="Yu H."/>
            <person name="Li Y."/>
            <person name="Xu H."/>
            <person name="Wei S."/>
            <person name="He X."/>
            <person name="Fang L."/>
            <person name="Zhang Z."/>
            <person name="Zhang Y."/>
            <person name="Huang X."/>
            <person name="Su Z."/>
            <person name="Tong W."/>
            <person name="Li J."/>
            <person name="Tong Z."/>
            <person name="Li S."/>
            <person name="Ye J."/>
            <person name="Wang L."/>
            <person name="Fang L."/>
            <person name="Lei T."/>
            <person name="Chen C.-S."/>
            <person name="Chen H.-C."/>
            <person name="Xu Z."/>
            <person name="Li H."/>
            <person name="Huang H."/>
            <person name="Zhang F."/>
            <person name="Xu H."/>
            <person name="Li N."/>
            <person name="Zhao C."/>
            <person name="Li S."/>
            <person name="Dong L."/>
            <person name="Huang Y."/>
            <person name="Li L."/>
            <person name="Xi Y."/>
            <person name="Qi Q."/>
            <person name="Li W."/>
            <person name="Zhang B."/>
            <person name="Hu W."/>
            <person name="Zhang Y."/>
            <person name="Tian X."/>
            <person name="Jiao Y."/>
            <person name="Liang X."/>
            <person name="Jin J."/>
            <person name="Gao L."/>
            <person name="Zheng W."/>
            <person name="Hao B."/>
            <person name="Liu S.-M."/>
            <person name="Wang W."/>
            <person name="Yuan L."/>
            <person name="Cao M."/>
            <person name="McDermott J."/>
            <person name="Samudrala R."/>
            <person name="Wang J."/>
            <person name="Wong G.K.-S."/>
            <person name="Yang H."/>
        </authorList>
    </citation>
    <scope>NUCLEOTIDE SEQUENCE [LARGE SCALE GENOMIC DNA]</scope>
    <source>
        <strain>cv. Nipponbare</strain>
    </source>
</reference>
<reference key="6">
    <citation type="journal article" date="2003" name="Science">
        <title>Collection, mapping, and annotation of over 28,000 cDNA clones from japonica rice.</title>
        <authorList>
            <consortium name="The rice full-length cDNA consortium"/>
        </authorList>
    </citation>
    <scope>NUCLEOTIDE SEQUENCE [LARGE SCALE MRNA]</scope>
    <source>
        <strain>cv. Nipponbare</strain>
    </source>
</reference>
<reference key="7">
    <citation type="journal article" date="2012" name="J. Biol. Chem.">
        <title>Identification of grass-specific enzyme that acylates monolignols with p-coumarate.</title>
        <authorList>
            <person name="Withers S."/>
            <person name="Lu F."/>
            <person name="Kim H."/>
            <person name="Zhu Y."/>
            <person name="Ralph J."/>
            <person name="Wilkerson C.G."/>
        </authorList>
    </citation>
    <scope>FUNCTION</scope>
    <scope>BIOPHYSICOCHEMICAL PROPERTIES</scope>
</reference>
<reference key="8">
    <citation type="journal article" date="2013" name="Plant Physiol.">
        <title>Overexpression of a BAHD acyltransferase, OsAt10, alters rice cell wall hydroxycinnamic acid content and saccharification.</title>
        <authorList>
            <person name="Bartley L.E."/>
            <person name="Peck M.L."/>
            <person name="Kim S.R."/>
            <person name="Ebert B."/>
            <person name="Manisseri C."/>
            <person name="Chiniquy D.M."/>
            <person name="Sykes R."/>
            <person name="Gao L."/>
            <person name="Rautengarten C."/>
            <person name="Vega-Sanchez M.E."/>
            <person name="Benke P.I."/>
            <person name="Canlas P.E."/>
            <person name="Cao P."/>
            <person name="Brewer S."/>
            <person name="Lin F."/>
            <person name="Smith W.L."/>
            <person name="Zhang X."/>
            <person name="Keasling J.D."/>
            <person name="Jentoff R.E."/>
            <person name="Foster S.B."/>
            <person name="Zhou J."/>
            <person name="Ziebell A."/>
            <person name="An G."/>
            <person name="Scheller H.V."/>
            <person name="Ronald P.C."/>
        </authorList>
    </citation>
    <scope>GENE FAMILY</scope>
    <scope>NOMENCLATURE</scope>
</reference>
<dbReference type="EC" id="2.3.1.-" evidence="5"/>
<dbReference type="EMBL" id="AP002482">
    <property type="protein sequence ID" value="BAD86875.1"/>
    <property type="molecule type" value="Genomic_DNA"/>
</dbReference>
<dbReference type="EMBL" id="AP008207">
    <property type="protein sequence ID" value="BAF04705.1"/>
    <property type="molecule type" value="Genomic_DNA"/>
</dbReference>
<dbReference type="EMBL" id="AP014957">
    <property type="protein sequence ID" value="BAS71658.1"/>
    <property type="molecule type" value="Genomic_DNA"/>
</dbReference>
<dbReference type="EMBL" id="CM000138">
    <property type="protein sequence ID" value="EAZ11526.1"/>
    <property type="molecule type" value="Genomic_DNA"/>
</dbReference>
<dbReference type="EMBL" id="AK060689">
    <property type="protein sequence ID" value="BAG87540.1"/>
    <property type="molecule type" value="mRNA"/>
</dbReference>
<dbReference type="EMBL" id="AK070443">
    <property type="protein sequence ID" value="BAG91955.1"/>
    <property type="molecule type" value="mRNA"/>
</dbReference>
<dbReference type="RefSeq" id="XP_015621300.1">
    <property type="nucleotide sequence ID" value="XM_015765814.1"/>
</dbReference>
<dbReference type="SMR" id="Q5JNT2"/>
<dbReference type="FunCoup" id="Q5JNT2">
    <property type="interactions" value="2"/>
</dbReference>
<dbReference type="PaxDb" id="39947-Q5JNT2"/>
<dbReference type="EnsemblPlants" id="Os01t0291500-01">
    <property type="protein sequence ID" value="Os01t0291500-01"/>
    <property type="gene ID" value="Os01g0291500"/>
</dbReference>
<dbReference type="EnsemblPlants" id="Os01t0291500-02">
    <property type="protein sequence ID" value="Os01t0291500-02"/>
    <property type="gene ID" value="Os01g0291500"/>
</dbReference>
<dbReference type="Gramene" id="Os01t0291500-01">
    <property type="protein sequence ID" value="Os01t0291500-01"/>
    <property type="gene ID" value="Os01g0291500"/>
</dbReference>
<dbReference type="Gramene" id="Os01t0291500-02">
    <property type="protein sequence ID" value="Os01t0291500-02"/>
    <property type="gene ID" value="Os01g0291500"/>
</dbReference>
<dbReference type="KEGG" id="dosa:Os01g0291500"/>
<dbReference type="eggNOG" id="ENOG502QQHA">
    <property type="taxonomic scope" value="Eukaryota"/>
</dbReference>
<dbReference type="HOGENOM" id="CLU_014546_2_0_1"/>
<dbReference type="InParanoid" id="Q5JNT2"/>
<dbReference type="OMA" id="ARIMTRC"/>
<dbReference type="OrthoDB" id="444127at2759"/>
<dbReference type="SABIO-RK" id="Q5JNT2"/>
<dbReference type="Proteomes" id="UP000000763">
    <property type="component" value="Chromosome 1"/>
</dbReference>
<dbReference type="Proteomes" id="UP000007752">
    <property type="component" value="Chromosome 1"/>
</dbReference>
<dbReference type="Proteomes" id="UP000059680">
    <property type="component" value="Chromosome 1"/>
</dbReference>
<dbReference type="GO" id="GO:0050734">
    <property type="term" value="F:hydroxycinnamoyltransferase activity"/>
    <property type="evidence" value="ECO:0007669"/>
    <property type="project" value="UniProtKB-ARBA"/>
</dbReference>
<dbReference type="GO" id="GO:0009809">
    <property type="term" value="P:lignin biosynthetic process"/>
    <property type="evidence" value="ECO:0007669"/>
    <property type="project" value="UniProtKB-KW"/>
</dbReference>
<dbReference type="Gene3D" id="3.30.559.10">
    <property type="entry name" value="Chloramphenicol acetyltransferase-like domain"/>
    <property type="match status" value="2"/>
</dbReference>
<dbReference type="InterPro" id="IPR023213">
    <property type="entry name" value="CAT-like_dom_sf"/>
</dbReference>
<dbReference type="InterPro" id="IPR050898">
    <property type="entry name" value="Plant_acyltransferase"/>
</dbReference>
<dbReference type="PANTHER" id="PTHR31147">
    <property type="entry name" value="ACYL TRANSFERASE 4"/>
    <property type="match status" value="1"/>
</dbReference>
<dbReference type="PANTHER" id="PTHR31147:SF1">
    <property type="entry name" value="ACYL TRANSFERASE 4"/>
    <property type="match status" value="1"/>
</dbReference>
<dbReference type="Pfam" id="PF02458">
    <property type="entry name" value="Transferase"/>
    <property type="match status" value="1"/>
</dbReference>
<comment type="function">
    <text evidence="2">Grass-specific monolignol p-coumaroyl transferase involved in the biosynthesis of acylated monolignols or monolignol conjugates that serve as monomer precursors of lignin. Can synthesize sinapyl p-coumarate, p-coumaryl p-coumarate, sinapyl caffeate and p-coumaryl caffeate in vitro.</text>
</comment>
<comment type="biophysicochemical properties">
    <kinetics>
        <KM evidence="2">35 uM for sinapyl alcohol</KM>
        <KM evidence="2">105 uM for p-coumaroyl-CoA</KM>
        <KM evidence="2">141 uM for p-coumaryl alcohol</KM>
        <Vmax evidence="2">10.8 nmol/sec/mg enzyme toward sinapyl alcohol</Vmax>
        <Vmax evidence="2">12.5 nmol/sec/mg enzyme toward p-coumaroyl-CoA</Vmax>
        <Vmax evidence="2">54.2 nmol/sec/mg enzyme toward p-coumaryl alcohol</Vmax>
    </kinetics>
</comment>
<comment type="similarity">
    <text evidence="5">Belongs to the plant acyltransferase family.</text>
</comment>
<evidence type="ECO:0000250" key="1">
    <source>
        <dbReference type="UniProtKB" id="Q8W1W9"/>
    </source>
</evidence>
<evidence type="ECO:0000269" key="2">
    <source>
    </source>
</evidence>
<evidence type="ECO:0000303" key="3">
    <source>
    </source>
</evidence>
<evidence type="ECO:0000303" key="4">
    <source>
    </source>
</evidence>
<evidence type="ECO:0000305" key="5"/>
<evidence type="ECO:0000312" key="6">
    <source>
        <dbReference type="EMBL" id="BAD86875.1"/>
    </source>
</evidence>
<evidence type="ECO:0000312" key="7">
    <source>
        <dbReference type="EMBL" id="BAS71658.1"/>
    </source>
</evidence>
<evidence type="ECO:0000312" key="8">
    <source>
        <dbReference type="EMBL" id="EAZ11526.1"/>
    </source>
</evidence>
<proteinExistence type="evidence at protein level"/>
<name>AT4_ORYSJ</name>
<organism>
    <name type="scientific">Oryza sativa subsp. japonica</name>
    <name type="common">Rice</name>
    <dbReference type="NCBI Taxonomy" id="39947"/>
    <lineage>
        <taxon>Eukaryota</taxon>
        <taxon>Viridiplantae</taxon>
        <taxon>Streptophyta</taxon>
        <taxon>Embryophyta</taxon>
        <taxon>Tracheophyta</taxon>
        <taxon>Spermatophyta</taxon>
        <taxon>Magnoliopsida</taxon>
        <taxon>Liliopsida</taxon>
        <taxon>Poales</taxon>
        <taxon>Poaceae</taxon>
        <taxon>BOP clade</taxon>
        <taxon>Oryzoideae</taxon>
        <taxon>Oryzeae</taxon>
        <taxon>Oryzinae</taxon>
        <taxon>Oryza</taxon>
        <taxon>Oryza sativa</taxon>
    </lineage>
</organism>
<protein>
    <recommendedName>
        <fullName evidence="5">Acyl transferase 4</fullName>
        <shortName evidence="4">OsAT4</shortName>
        <ecNumber evidence="5">2.3.1.-</ecNumber>
    </recommendedName>
    <alternativeName>
        <fullName evidence="5">p-coumaroyl-CoA monolignol transferase</fullName>
        <shortName evidence="3">OsPMT</shortName>
    </alternativeName>
</protein>
<keyword id="KW-0012">Acyltransferase</keyword>
<keyword id="KW-0438">Lignin biosynthesis</keyword>
<keyword id="KW-1185">Reference proteome</keyword>
<keyword id="KW-0808">Transferase</keyword>
<sequence>MGFAVVRTNREFVRPSAATPPSSGELLELSIIDRVVGLRHLVRSLHIFSAAAPSGGDAKPSPARVIKEALGKALVDYYPFAGRFVDGGGGPGSARVECTGEGAWFVEAAAGCSLDDVNGLDHPLMIPEDDLLPDAAPGVHPLDLPLMMQVTEFSCGGFVVGLISVHTMADGLGAGQFINAVGDYARGLDRPRVSPVWAREAIPSPPKLPPGPPPELKMFQLRHVTADLSLDSINKAKSAYFAATGHRCSTFDVAIAKTWQARTRALRLPEPTSRVNLCFFANTRHLMAGAAAWPAPAAGGNGGNGFYGNCFYPVSVVAESGAVEAADVAGVVGMIREAKARLPADFARWAVADFREDPYELSFTYDSLFVSDWTRLGFLEADYGWGPPSHVIPFAYYPFMAVAIIGAPPVPKTGARIMTQCVEDDHLPAFKEEIKAFDK</sequence>
<gene>
    <name evidence="4" type="primary">AT4</name>
    <name evidence="3" type="synonym">PMT</name>
    <name evidence="7" type="ordered locus">Os01g0291500</name>
    <name evidence="5" type="ordered locus">LOC_Os01g18744</name>
    <name evidence="8" type="ORF">OsJ_01392</name>
    <name evidence="6" type="ORF">P0706B05.17</name>
</gene>